<proteinExistence type="evidence at protein level"/>
<accession>K5BE02</accession>
<name>MANT_MYCHD</name>
<sequence length="411" mass="45091">MRIALLSYRSKTHCGGQGVYVRHLSRELAELGHDVEVFSGQPYPEGLDPRVRLTKVPSLDLYREPDPFRIPRPSEIKTSIDLEELLTTWTAGFPEPKTFSLRAARVLAGRRGDFDVVHDNQCLGTGLLQIAKMGFPLVATVHHPITRDREVEVAAARWWRKPLVRRWYGFVEMQKRVARQIPELLTVSSASASDILTDFAVSPEQLHVVPLGVDTKLFQPREGRVRNRIIAIASADVPLKGVSHLLHAVARLRVERDVELQLVTKLEPNGPTEKLIAELGISDIVHTSSGLSDEELAALLASAEVACIPSLYEGFSLPAVEAMASGTPIVASRAGALPEVVGPDGECARLVTPADVDELTAVLGRLLDSPRELRRLGDNGRRRAVEVFSWQSVAAQTVAVYEKAIARVAAC</sequence>
<dbReference type="EC" id="2.4.1.393" evidence="1"/>
<dbReference type="EMBL" id="AMRA01000112">
    <property type="protein sequence ID" value="EKF21851.1"/>
    <property type="molecule type" value="Genomic_DNA"/>
</dbReference>
<dbReference type="EMBL" id="LR026975">
    <property type="protein sequence ID" value="VCT92672.1"/>
    <property type="molecule type" value="Genomic_DNA"/>
</dbReference>
<dbReference type="RefSeq" id="WP_005631138.1">
    <property type="nucleotide sequence ID" value="NZ_AMRA01000112.1"/>
</dbReference>
<dbReference type="PDB" id="7QSG">
    <property type="method" value="X-ray"/>
    <property type="resolution" value="2.75 A"/>
    <property type="chains" value="A/B=1-411"/>
</dbReference>
<dbReference type="PDBsum" id="7QSG"/>
<dbReference type="SMR" id="K5BE02"/>
<dbReference type="STRING" id="1122247.GCA_000379865_01284"/>
<dbReference type="KEGG" id="mhas:MHAS_04402"/>
<dbReference type="PATRIC" id="fig|1122247.3.peg.3997"/>
<dbReference type="eggNOG" id="COG0438">
    <property type="taxonomic scope" value="Bacteria"/>
</dbReference>
<dbReference type="OrthoDB" id="8555507at2"/>
<dbReference type="Proteomes" id="UP000006265">
    <property type="component" value="Unassembled WGS sequence"/>
</dbReference>
<dbReference type="GO" id="GO:0102710">
    <property type="term" value="F:D-inositol-3-phosphate glycosyltransferase activity"/>
    <property type="evidence" value="ECO:0007669"/>
    <property type="project" value="UniProtKB-EC"/>
</dbReference>
<dbReference type="GO" id="GO:0009103">
    <property type="term" value="P:lipopolysaccharide biosynthetic process"/>
    <property type="evidence" value="ECO:0007669"/>
    <property type="project" value="TreeGrafter"/>
</dbReference>
<dbReference type="CDD" id="cd03801">
    <property type="entry name" value="GT4_PimA-like"/>
    <property type="match status" value="1"/>
</dbReference>
<dbReference type="Gene3D" id="3.40.50.2000">
    <property type="entry name" value="Glycogen Phosphorylase B"/>
    <property type="match status" value="2"/>
</dbReference>
<dbReference type="InterPro" id="IPR001296">
    <property type="entry name" value="Glyco_trans_1"/>
</dbReference>
<dbReference type="InterPro" id="IPR028098">
    <property type="entry name" value="Glyco_trans_4-like_N"/>
</dbReference>
<dbReference type="PANTHER" id="PTHR46401">
    <property type="entry name" value="GLYCOSYLTRANSFERASE WBBK-RELATED"/>
    <property type="match status" value="1"/>
</dbReference>
<dbReference type="PANTHER" id="PTHR46401:SF2">
    <property type="entry name" value="GLYCOSYLTRANSFERASE WBBK-RELATED"/>
    <property type="match status" value="1"/>
</dbReference>
<dbReference type="Pfam" id="PF13439">
    <property type="entry name" value="Glyco_transf_4"/>
    <property type="match status" value="1"/>
</dbReference>
<dbReference type="Pfam" id="PF00534">
    <property type="entry name" value="Glycos_transf_1"/>
    <property type="match status" value="1"/>
</dbReference>
<dbReference type="SUPFAM" id="SSF53756">
    <property type="entry name" value="UDP-Glycosyltransferase/glycogen phosphorylase"/>
    <property type="match status" value="1"/>
</dbReference>
<feature type="chain" id="PRO_0000461213" description="MMP alpha-(1-&gt;4)-mannosyltransferase">
    <location>
        <begin position="1"/>
        <end position="411"/>
    </location>
</feature>
<feature type="mutagenesis site" description="Loss of activity." evidence="1">
    <original>K</original>
    <variation>A</variation>
    <location>
        <position position="240"/>
    </location>
</feature>
<feature type="mutagenesis site" description="Strong decrease in activity." evidence="1">
    <original>E</original>
    <variation>A</variation>
    <location>
        <position position="313"/>
    </location>
</feature>
<feature type="mutagenesis site" description="Loss of activity." evidence="1">
    <original>E</original>
    <variation>A</variation>
    <location>
        <position position="321"/>
    </location>
</feature>
<feature type="strand" evidence="7">
    <location>
        <begin position="2"/>
        <end position="8"/>
    </location>
</feature>
<feature type="turn" evidence="7">
    <location>
        <begin position="15"/>
        <end position="17"/>
    </location>
</feature>
<feature type="helix" evidence="7">
    <location>
        <begin position="18"/>
        <end position="31"/>
    </location>
</feature>
<feature type="strand" evidence="7">
    <location>
        <begin position="34"/>
        <end position="39"/>
    </location>
</feature>
<feature type="strand" evidence="7">
    <location>
        <begin position="51"/>
        <end position="55"/>
    </location>
</feature>
<feature type="helix" evidence="7">
    <location>
        <begin position="95"/>
        <end position="108"/>
    </location>
</feature>
<feature type="turn" evidence="7">
    <location>
        <begin position="109"/>
        <end position="112"/>
    </location>
</feature>
<feature type="strand" evidence="7">
    <location>
        <begin position="115"/>
        <end position="121"/>
    </location>
</feature>
<feature type="helix" evidence="7">
    <location>
        <begin position="125"/>
        <end position="132"/>
    </location>
</feature>
<feature type="strand" evidence="7">
    <location>
        <begin position="137"/>
        <end position="143"/>
    </location>
</feature>
<feature type="helix" evidence="7">
    <location>
        <begin position="149"/>
        <end position="151"/>
    </location>
</feature>
<feature type="helix" evidence="7">
    <location>
        <begin position="168"/>
        <end position="170"/>
    </location>
</feature>
<feature type="helix" evidence="7">
    <location>
        <begin position="171"/>
        <end position="178"/>
    </location>
</feature>
<feature type="strand" evidence="7">
    <location>
        <begin position="182"/>
        <end position="187"/>
    </location>
</feature>
<feature type="helix" evidence="7">
    <location>
        <begin position="189"/>
        <end position="198"/>
    </location>
</feature>
<feature type="strand" evidence="7">
    <location>
        <begin position="206"/>
        <end position="208"/>
    </location>
</feature>
<feature type="turn" evidence="7">
    <location>
        <begin position="215"/>
        <end position="217"/>
    </location>
</feature>
<feature type="strand" evidence="7">
    <location>
        <begin position="228"/>
        <end position="232"/>
    </location>
</feature>
<feature type="helix" evidence="7">
    <location>
        <begin position="242"/>
        <end position="252"/>
    </location>
</feature>
<feature type="turn" evidence="7">
    <location>
        <begin position="253"/>
        <end position="255"/>
    </location>
</feature>
<feature type="strand" evidence="7">
    <location>
        <begin position="259"/>
        <end position="263"/>
    </location>
</feature>
<feature type="helix" evidence="7">
    <location>
        <begin position="275"/>
        <end position="278"/>
    </location>
</feature>
<feature type="turn" evidence="7">
    <location>
        <begin position="279"/>
        <end position="284"/>
    </location>
</feature>
<feature type="strand" evidence="7">
    <location>
        <begin position="285"/>
        <end position="288"/>
    </location>
</feature>
<feature type="helix" evidence="7">
    <location>
        <begin position="293"/>
        <end position="302"/>
    </location>
</feature>
<feature type="strand" evidence="7">
    <location>
        <begin position="303"/>
        <end position="310"/>
    </location>
</feature>
<feature type="strand" evidence="7">
    <location>
        <begin position="313"/>
        <end position="315"/>
    </location>
</feature>
<feature type="helix" evidence="7">
    <location>
        <begin position="317"/>
        <end position="324"/>
    </location>
</feature>
<feature type="strand" evidence="7">
    <location>
        <begin position="329"/>
        <end position="333"/>
    </location>
</feature>
<feature type="helix" evidence="7">
    <location>
        <begin position="337"/>
        <end position="340"/>
    </location>
</feature>
<feature type="turn" evidence="7">
    <location>
        <begin position="344"/>
        <end position="346"/>
    </location>
</feature>
<feature type="strand" evidence="7">
    <location>
        <begin position="347"/>
        <end position="351"/>
    </location>
</feature>
<feature type="helix" evidence="7">
    <location>
        <begin position="356"/>
        <end position="367"/>
    </location>
</feature>
<feature type="helix" evidence="7">
    <location>
        <begin position="370"/>
        <end position="387"/>
    </location>
</feature>
<feature type="helix" evidence="7">
    <location>
        <begin position="390"/>
        <end position="406"/>
    </location>
</feature>
<reference key="1">
    <citation type="journal article" date="2012" name="J. Bacteriol.">
        <title>Genome sequence of Mycobacterium hassiacum DSM 44199, a rare source of heat-stable mycobacterial proteins.</title>
        <authorList>
            <person name="Tiago I."/>
            <person name="Maranha A."/>
            <person name="Mendes V."/>
            <person name="Alarico S."/>
            <person name="Moynihan P.J."/>
            <person name="Clarke A.J."/>
            <person name="Macedo-Ribeiro S."/>
            <person name="Pereira P.J."/>
            <person name="Empadinhas N."/>
        </authorList>
    </citation>
    <scope>NUCLEOTIDE SEQUENCE [LARGE SCALE GENOMIC DNA]</scope>
    <source>
        <strain>DSM 44199 / CIP 105218 / JCM 12690 / 3849</strain>
    </source>
</reference>
<reference key="2">
    <citation type="journal article" date="2019" name="Microbiol. Resour. Announc.">
        <title>Complete genome sequence of Mycolicibacterium hassiacum DSM 44199.</title>
        <authorList>
            <person name="Sanchez M."/>
            <person name="Blesa A."/>
            <person name="Sacristan-Horcajada E."/>
            <person name="Berenguer J."/>
        </authorList>
    </citation>
    <scope>NUCLEOTIDE SEQUENCE [LARGE SCALE GENOMIC DNA]</scope>
    <source>
        <strain>DSM 44199 / CIP 105218 / JCM 12690 / 3849</strain>
    </source>
</reference>
<reference evidence="6" key="3">
    <citation type="journal article" date="2023" name="Commun. Biol.">
        <title>Self-recycling and partially conservative replication of mycobacterial methylmannose polysaccharides.</title>
        <authorList>
            <person name="Maranha A."/>
            <person name="Costa M."/>
            <person name="Ripoll-Rozada J."/>
            <person name="Manso J.A."/>
            <person name="Miranda V."/>
            <person name="Mendes V.M."/>
            <person name="Manadas B."/>
            <person name="Macedo-Ribeiro S."/>
            <person name="Ventura M.R."/>
            <person name="Pereira P.J.B."/>
            <person name="Empadinhas N."/>
        </authorList>
    </citation>
    <scope>X-RAY CRYSTALLOGRAPHY (2.75 ANGSTROMS)</scope>
    <scope>FUNCTION</scope>
    <scope>CATALYTIC ACTIVITY</scope>
    <scope>ACTIVITY REGULATION</scope>
    <scope>BIOPHYSICOCHEMICAL PROPERTIES</scope>
    <scope>MUTAGENESIS OF LYS-240; GLU-313 AND GLU-321</scope>
    <source>
        <strain>DSM 44199 / CIP 105218 / JCM 12690 / 3849</strain>
    </source>
</reference>
<protein>
    <recommendedName>
        <fullName evidence="2">MMP alpha-(1-&gt;4)-mannosyltransferase</fullName>
        <ecNumber evidence="1">2.4.1.393</ecNumber>
    </recommendedName>
</protein>
<comment type="function">
    <text evidence="1">Glycosyltransferase involved in the biosynthesis of 3-O-methylmannose polysaccharides (MMP), which are intracellular polymethylated polysaccharides implicated in the modulation of fatty acid metabolism in non-tuberculous mycobacteria (PubMed:36707645). Highly specific alpha-(1-&gt;4)-mannosyltransferase that can transfer mannose units from GDP-mannose to a wide range of alpha-(1-&gt;4) oligomannosides longer than three mannoses, including all hydrolytic products of MmpH (PubMed:36707645). Can use synthetic trimannosides and tetramannosides as substrates, but not mono- and disaccharides, and is significantly more active with the methylated substrates, preferring the tetramannosides over the trimannosides (PubMed:36707645).</text>
</comment>
<comment type="catalytic activity">
    <reaction evidence="1">
        <text>[3-O-methyl-alpha-D-mannosyl-(1-&gt;4)](n)-3-O-methyl-D-mannose + GDP-alpha-D-mannose = alpha-D-mannosyl-(1-&gt;4)-[3-O-methyl-alpha-D-mannosyl-(1-&gt;4)](n)-3-O-methyl-D-mannose + GDP + H(+)</text>
        <dbReference type="Rhea" id="RHEA:77251"/>
        <dbReference type="Rhea" id="RHEA-COMP:18868"/>
        <dbReference type="Rhea" id="RHEA-COMP:18869"/>
        <dbReference type="ChEBI" id="CHEBI:15378"/>
        <dbReference type="ChEBI" id="CHEBI:57527"/>
        <dbReference type="ChEBI" id="CHEBI:58189"/>
        <dbReference type="ChEBI" id="CHEBI:196962"/>
        <dbReference type="ChEBI" id="CHEBI:196967"/>
        <dbReference type="EC" id="2.4.1.393"/>
    </reaction>
    <physiologicalReaction direction="left-to-right" evidence="1">
        <dbReference type="Rhea" id="RHEA:77252"/>
    </physiologicalReaction>
</comment>
<comment type="catalytic activity">
    <reaction evidence="1">
        <text>[3-O-methyl-alpha-D-mannosyl-(1-&gt;4)](n)-1-O,3-O-dimethyl-alpha-D-mannose + GDP-alpha-D-mannose = alpha-D-mannosyl-(1-&gt;4)-[3-O-methyl-alpha-D-mannosyl-(1-&gt;4)](n)-1-O,3-O-dimethyl-alpha-D-mannose + GDP + H(+)</text>
        <dbReference type="Rhea" id="RHEA:77335"/>
        <dbReference type="Rhea" id="RHEA-COMP:18875"/>
        <dbReference type="Rhea" id="RHEA-COMP:18876"/>
        <dbReference type="ChEBI" id="CHEBI:15378"/>
        <dbReference type="ChEBI" id="CHEBI:57527"/>
        <dbReference type="ChEBI" id="CHEBI:58189"/>
        <dbReference type="ChEBI" id="CHEBI:195279"/>
        <dbReference type="ChEBI" id="CHEBI:195281"/>
        <dbReference type="EC" id="2.4.1.393"/>
    </reaction>
    <physiologicalReaction direction="left-to-right" evidence="1">
        <dbReference type="Rhea" id="RHEA:77336"/>
    </physiologicalReaction>
</comment>
<comment type="activity regulation">
    <text evidence="1">Activity is significantly enhanced in the presence of Mg(2+).</text>
</comment>
<comment type="biophysicochemical properties">
    <kinetics>
        <KM evidence="1">0.13 mM for sMetMan(4) (at 37 degrees Celsius)</KM>
        <KM evidence="1">2.78 mM for sMan(4) (at 37 degrees Celsius)</KM>
        <KM evidence="1">0.28 mM for GDP-mannose (in the presence of sMetMan(4), at 37 degrees Celsius)</KM>
        <KM evidence="1">0.49 mM for GDP-mannose (in the presence of sMan(4), at 37 degrees Celsius)</KM>
        <Vmax evidence="1">1.5 umol/min/mg enzyme with sMetMan(4) as substrate (at 37 degrees Celsius)</Vmax>
        <Vmax evidence="1">0.8 umol/min/mg enzyme with sMan(4) as substrate (at 37 degrees Celsius)</Vmax>
        <Vmax evidence="1">1.55 umol/min/mg enzyme with GDP-mannose as substrate (in the presence of sMetMan(4), at 37 degrees Celsius)</Vmax>
        <Vmax evidence="1">0.57 umol/min/mg enzyme with GDP-mannose as substrate (in the presence of sMan(4), at 37 degrees Celsius)</Vmax>
        <text evidence="1">kcat is 0.047 sec(-1) with sMetMan(4) as substrate (at 37 degrees Celsius). kcat is 0.025 sec(-1) with sMan(4) as substrate (at 37 degrees Celsius). kcat is 0.048 sec(-1) with GDP-mannose as substrate (in the presence of sMetMan(4), at 37 degrees Celsius). kcat is 0.017 sec(-1) with GDP-mannose as substrate (in the presence of sMan(4), at 37 degrees Celsius).</text>
    </kinetics>
    <phDependence>
        <text evidence="1">Optimum pH is 8.5.</text>
    </phDependence>
    <temperatureDependence>
        <text evidence="1">Optimum temperature is 40 degrees Celsius.</text>
    </temperatureDependence>
</comment>
<comment type="similarity">
    <text evidence="3">Belongs to the glycosyltransferase group 1 family. Glycosyltransferase 4 subfamily.</text>
</comment>
<evidence type="ECO:0000269" key="1">
    <source>
    </source>
</evidence>
<evidence type="ECO:0000303" key="2">
    <source>
    </source>
</evidence>
<evidence type="ECO:0000305" key="3"/>
<evidence type="ECO:0000312" key="4">
    <source>
        <dbReference type="EMBL" id="EKF21851.1"/>
    </source>
</evidence>
<evidence type="ECO:0000312" key="5">
    <source>
        <dbReference type="EMBL" id="VCT92672.1"/>
    </source>
</evidence>
<evidence type="ECO:0007744" key="6">
    <source>
        <dbReference type="PDB" id="7QSG"/>
    </source>
</evidence>
<evidence type="ECO:0007829" key="7">
    <source>
        <dbReference type="PDB" id="7QSG"/>
    </source>
</evidence>
<gene>
    <name evidence="2" type="primary">manT</name>
    <name evidence="4" type="ORF">C731_4166</name>
    <name evidence="5" type="ORF">MHAS_04402</name>
</gene>
<keyword id="KW-0002">3D-structure</keyword>
<keyword id="KW-0119">Carbohydrate metabolism</keyword>
<keyword id="KW-0328">Glycosyltransferase</keyword>
<keyword id="KW-1185">Reference proteome</keyword>
<keyword id="KW-0808">Transferase</keyword>
<organism>
    <name type="scientific">Mycolicibacterium hassiacum (strain DSM 44199 / CIP 105218 / JCM 12690 / 3849)</name>
    <name type="common">Mycobacterium hassiacum</name>
    <dbReference type="NCBI Taxonomy" id="1122247"/>
    <lineage>
        <taxon>Bacteria</taxon>
        <taxon>Bacillati</taxon>
        <taxon>Actinomycetota</taxon>
        <taxon>Actinomycetes</taxon>
        <taxon>Mycobacteriales</taxon>
        <taxon>Mycobacteriaceae</taxon>
        <taxon>Mycolicibacterium</taxon>
    </lineage>
</organism>